<sequence length="272" mass="30029">MTLQEQIMKALHVQPVIDPKAEIRKRVDFLKDYVKKTGAKGFVLGISGGQDSTLAGRLAQLAVEEIRNEGGNATFIAVRLPYKVQKDEDDAQLALQFIQADQSVAFDIASTVDAFSNQYENLLGESLTDFNKGNVKARIRMVTQYAIGGQNGLLVIGTDHAAEAVTGFFTKFGDGGADLLPLTGLTKRQGRALLQELGADERLYLKMPTADLLDEKPGQADETELGITYDQLDDYLEGKAVPTDVAEKIEKRYTVSEHKRQVPASMFDDWWK</sequence>
<proteinExistence type="inferred from homology"/>
<comment type="function">
    <text evidence="1">Catalyzes the ATP-dependent amidation of deamido-NAD to form NAD. Uses ammonia as a nitrogen source.</text>
</comment>
<comment type="catalytic activity">
    <reaction evidence="1">
        <text>deamido-NAD(+) + NH4(+) + ATP = AMP + diphosphate + NAD(+) + H(+)</text>
        <dbReference type="Rhea" id="RHEA:21188"/>
        <dbReference type="ChEBI" id="CHEBI:15378"/>
        <dbReference type="ChEBI" id="CHEBI:28938"/>
        <dbReference type="ChEBI" id="CHEBI:30616"/>
        <dbReference type="ChEBI" id="CHEBI:33019"/>
        <dbReference type="ChEBI" id="CHEBI:57540"/>
        <dbReference type="ChEBI" id="CHEBI:58437"/>
        <dbReference type="ChEBI" id="CHEBI:456215"/>
        <dbReference type="EC" id="6.3.1.5"/>
    </reaction>
</comment>
<comment type="pathway">
    <text evidence="1">Cofactor biosynthesis; NAD(+) biosynthesis; NAD(+) from deamido-NAD(+) (ammonia route): step 1/1.</text>
</comment>
<comment type="subunit">
    <text evidence="1">Homodimer.</text>
</comment>
<comment type="similarity">
    <text evidence="1">Belongs to the NAD synthetase family.</text>
</comment>
<accession>B7HND7</accession>
<feature type="chain" id="PRO_1000118616" description="NH(3)-dependent NAD(+) synthetase">
    <location>
        <begin position="1"/>
        <end position="272"/>
    </location>
</feature>
<feature type="binding site" evidence="1">
    <location>
        <begin position="45"/>
        <end position="52"/>
    </location>
    <ligand>
        <name>ATP</name>
        <dbReference type="ChEBI" id="CHEBI:30616"/>
    </ligand>
</feature>
<feature type="binding site" evidence="1">
    <location>
        <position position="51"/>
    </location>
    <ligand>
        <name>Mg(2+)</name>
        <dbReference type="ChEBI" id="CHEBI:18420"/>
    </ligand>
</feature>
<feature type="binding site" evidence="1">
    <location>
        <position position="138"/>
    </location>
    <ligand>
        <name>deamido-NAD(+)</name>
        <dbReference type="ChEBI" id="CHEBI:58437"/>
    </ligand>
</feature>
<feature type="binding site" evidence="1">
    <location>
        <position position="158"/>
    </location>
    <ligand>
        <name>ATP</name>
        <dbReference type="ChEBI" id="CHEBI:30616"/>
    </ligand>
</feature>
<feature type="binding site" evidence="1">
    <location>
        <position position="163"/>
    </location>
    <ligand>
        <name>Mg(2+)</name>
        <dbReference type="ChEBI" id="CHEBI:18420"/>
    </ligand>
</feature>
<feature type="binding site" evidence="1">
    <location>
        <position position="171"/>
    </location>
    <ligand>
        <name>deamido-NAD(+)</name>
        <dbReference type="ChEBI" id="CHEBI:58437"/>
    </ligand>
</feature>
<feature type="binding site" evidence="1">
    <location>
        <position position="178"/>
    </location>
    <ligand>
        <name>deamido-NAD(+)</name>
        <dbReference type="ChEBI" id="CHEBI:58437"/>
    </ligand>
</feature>
<feature type="binding site" evidence="1">
    <location>
        <position position="187"/>
    </location>
    <ligand>
        <name>ATP</name>
        <dbReference type="ChEBI" id="CHEBI:30616"/>
    </ligand>
</feature>
<feature type="binding site" evidence="1">
    <location>
        <position position="209"/>
    </location>
    <ligand>
        <name>ATP</name>
        <dbReference type="ChEBI" id="CHEBI:30616"/>
    </ligand>
</feature>
<feature type="binding site" evidence="1">
    <location>
        <begin position="258"/>
        <end position="259"/>
    </location>
    <ligand>
        <name>deamido-NAD(+)</name>
        <dbReference type="ChEBI" id="CHEBI:58437"/>
    </ligand>
</feature>
<dbReference type="EC" id="6.3.1.5" evidence="1"/>
<dbReference type="EMBL" id="CP001177">
    <property type="protein sequence ID" value="ACJ80589.1"/>
    <property type="molecule type" value="Genomic_DNA"/>
</dbReference>
<dbReference type="SMR" id="B7HND7"/>
<dbReference type="KEGG" id="bcr:BCAH187_A2095"/>
<dbReference type="HOGENOM" id="CLU_059327_3_0_9"/>
<dbReference type="UniPathway" id="UPA00253">
    <property type="reaction ID" value="UER00333"/>
</dbReference>
<dbReference type="Proteomes" id="UP000002214">
    <property type="component" value="Chromosome"/>
</dbReference>
<dbReference type="GO" id="GO:0005737">
    <property type="term" value="C:cytoplasm"/>
    <property type="evidence" value="ECO:0007669"/>
    <property type="project" value="InterPro"/>
</dbReference>
<dbReference type="GO" id="GO:0005524">
    <property type="term" value="F:ATP binding"/>
    <property type="evidence" value="ECO:0007669"/>
    <property type="project" value="UniProtKB-UniRule"/>
</dbReference>
<dbReference type="GO" id="GO:0004359">
    <property type="term" value="F:glutaminase activity"/>
    <property type="evidence" value="ECO:0007669"/>
    <property type="project" value="InterPro"/>
</dbReference>
<dbReference type="GO" id="GO:0046872">
    <property type="term" value="F:metal ion binding"/>
    <property type="evidence" value="ECO:0007669"/>
    <property type="project" value="UniProtKB-KW"/>
</dbReference>
<dbReference type="GO" id="GO:0003952">
    <property type="term" value="F:NAD+ synthase (glutamine-hydrolyzing) activity"/>
    <property type="evidence" value="ECO:0007669"/>
    <property type="project" value="InterPro"/>
</dbReference>
<dbReference type="GO" id="GO:0008795">
    <property type="term" value="F:NAD+ synthase activity"/>
    <property type="evidence" value="ECO:0007669"/>
    <property type="project" value="UniProtKB-UniRule"/>
</dbReference>
<dbReference type="GO" id="GO:0009435">
    <property type="term" value="P:NAD biosynthetic process"/>
    <property type="evidence" value="ECO:0007669"/>
    <property type="project" value="UniProtKB-UniRule"/>
</dbReference>
<dbReference type="CDD" id="cd00553">
    <property type="entry name" value="NAD_synthase"/>
    <property type="match status" value="1"/>
</dbReference>
<dbReference type="FunFam" id="3.40.50.620:FF:000015">
    <property type="entry name" value="NH(3)-dependent NAD(+) synthetase"/>
    <property type="match status" value="1"/>
</dbReference>
<dbReference type="Gene3D" id="3.40.50.620">
    <property type="entry name" value="HUPs"/>
    <property type="match status" value="1"/>
</dbReference>
<dbReference type="HAMAP" id="MF_00193">
    <property type="entry name" value="NadE_ammonia_dep"/>
    <property type="match status" value="1"/>
</dbReference>
<dbReference type="InterPro" id="IPR022310">
    <property type="entry name" value="NAD/GMP_synthase"/>
</dbReference>
<dbReference type="InterPro" id="IPR003694">
    <property type="entry name" value="NAD_synthase"/>
</dbReference>
<dbReference type="InterPro" id="IPR022926">
    <property type="entry name" value="NH(3)-dep_NAD(+)_synth"/>
</dbReference>
<dbReference type="InterPro" id="IPR014729">
    <property type="entry name" value="Rossmann-like_a/b/a_fold"/>
</dbReference>
<dbReference type="NCBIfam" id="TIGR00552">
    <property type="entry name" value="nadE"/>
    <property type="match status" value="1"/>
</dbReference>
<dbReference type="NCBIfam" id="NF001979">
    <property type="entry name" value="PRK00768.1"/>
    <property type="match status" value="1"/>
</dbReference>
<dbReference type="PANTHER" id="PTHR23090">
    <property type="entry name" value="NH 3 /GLUTAMINE-DEPENDENT NAD + SYNTHETASE"/>
    <property type="match status" value="1"/>
</dbReference>
<dbReference type="PANTHER" id="PTHR23090:SF7">
    <property type="entry name" value="NH(3)-DEPENDENT NAD(+) SYNTHETASE"/>
    <property type="match status" value="1"/>
</dbReference>
<dbReference type="Pfam" id="PF02540">
    <property type="entry name" value="NAD_synthase"/>
    <property type="match status" value="1"/>
</dbReference>
<dbReference type="SUPFAM" id="SSF52402">
    <property type="entry name" value="Adenine nucleotide alpha hydrolases-like"/>
    <property type="match status" value="1"/>
</dbReference>
<organism>
    <name type="scientific">Bacillus cereus (strain AH187)</name>
    <dbReference type="NCBI Taxonomy" id="405534"/>
    <lineage>
        <taxon>Bacteria</taxon>
        <taxon>Bacillati</taxon>
        <taxon>Bacillota</taxon>
        <taxon>Bacilli</taxon>
        <taxon>Bacillales</taxon>
        <taxon>Bacillaceae</taxon>
        <taxon>Bacillus</taxon>
        <taxon>Bacillus cereus group</taxon>
    </lineage>
</organism>
<name>NADE_BACC7</name>
<gene>
    <name evidence="1" type="primary">nadE</name>
    <name type="ordered locus">BCAH187_A2095</name>
</gene>
<protein>
    <recommendedName>
        <fullName evidence="1">NH(3)-dependent NAD(+) synthetase</fullName>
        <ecNumber evidence="1">6.3.1.5</ecNumber>
    </recommendedName>
</protein>
<reference key="1">
    <citation type="submission" date="2008-10" db="EMBL/GenBank/DDBJ databases">
        <title>Genome sequence of Bacillus cereus AH187.</title>
        <authorList>
            <person name="Dodson R.J."/>
            <person name="Durkin A.S."/>
            <person name="Rosovitz M.J."/>
            <person name="Rasko D.A."/>
            <person name="Kolsto A.B."/>
            <person name="Okstad O.A."/>
            <person name="Ravel J."/>
            <person name="Sutton G."/>
        </authorList>
    </citation>
    <scope>NUCLEOTIDE SEQUENCE [LARGE SCALE GENOMIC DNA]</scope>
    <source>
        <strain>AH187</strain>
    </source>
</reference>
<keyword id="KW-0067">ATP-binding</keyword>
<keyword id="KW-0436">Ligase</keyword>
<keyword id="KW-0460">Magnesium</keyword>
<keyword id="KW-0479">Metal-binding</keyword>
<keyword id="KW-0520">NAD</keyword>
<keyword id="KW-0547">Nucleotide-binding</keyword>
<evidence type="ECO:0000255" key="1">
    <source>
        <dbReference type="HAMAP-Rule" id="MF_00193"/>
    </source>
</evidence>